<accession>P85404</accession>
<feature type="chain" id="PRO_0000341519" description="Unknown protein 6">
    <location>
        <begin position="1" status="less than"/>
        <end position="13" status="greater than"/>
    </location>
</feature>
<feature type="unsure residue" description="D or I" evidence="1">
    <location>
        <position position="2"/>
    </location>
</feature>
<feature type="unsure residue" description="V or T" evidence="1">
    <location>
        <position position="3"/>
    </location>
</feature>
<feature type="unsure residue" description="L or I" evidence="1">
    <location>
        <position position="12"/>
    </location>
</feature>
<feature type="non-terminal residue" evidence="1">
    <location>
        <position position="1"/>
    </location>
</feature>
<feature type="non-terminal residue" evidence="1">
    <location>
        <position position="13"/>
    </location>
</feature>
<reference key="1">
    <citation type="journal article" date="2009" name="Physiol. Plantarum">
        <title>The presence of sinapyl lignin in Ginkgo biloba cell cultures changes our views of the evolution of lignin biosynthesis.</title>
        <authorList>
            <person name="Novo Uzal E."/>
            <person name="Gomez Ros L.V."/>
            <person name="Pomar F."/>
            <person name="Bernal M.A."/>
            <person name="Paradela A."/>
            <person name="Albar J.P."/>
            <person name="Ros Barcelo A."/>
        </authorList>
    </citation>
    <scope>PROTEIN SEQUENCE</scope>
    <source>
        <strain>PC-650</strain>
        <tissue>Callus</tissue>
    </source>
</reference>
<protein>
    <recommendedName>
        <fullName>Unknown protein 6</fullName>
    </recommendedName>
</protein>
<sequence length="13" mass="1356">GDVVANPESVELK</sequence>
<evidence type="ECO:0000305" key="1"/>
<name>UP06_GINBI</name>
<organism>
    <name type="scientific">Ginkgo biloba</name>
    <name type="common">Ginkgo</name>
    <name type="synonym">Maidenhair tree</name>
    <dbReference type="NCBI Taxonomy" id="3311"/>
    <lineage>
        <taxon>Eukaryota</taxon>
        <taxon>Viridiplantae</taxon>
        <taxon>Streptophyta</taxon>
        <taxon>Embryophyta</taxon>
        <taxon>Tracheophyta</taxon>
        <taxon>Spermatophyta</taxon>
        <taxon>Ginkgoidae</taxon>
        <taxon>Ginkgoales</taxon>
        <taxon>Ginkgoaceae</taxon>
        <taxon>Ginkgo</taxon>
    </lineage>
</organism>
<keyword id="KW-0903">Direct protein sequencing</keyword>
<proteinExistence type="evidence at protein level"/>